<dbReference type="EMBL" id="AE015929">
    <property type="protein sequence ID" value="AAO05653.1"/>
    <property type="molecule type" value="Genomic_DNA"/>
</dbReference>
<dbReference type="RefSeq" id="NP_765567.1">
    <property type="nucleotide sequence ID" value="NC_004461.1"/>
</dbReference>
<dbReference type="RefSeq" id="WP_001831505.1">
    <property type="nucleotide sequence ID" value="NZ_WBME01000003.1"/>
</dbReference>
<dbReference type="SMR" id="Q8CN55"/>
<dbReference type="KEGG" id="sep:SE_2012"/>
<dbReference type="PATRIC" id="fig|176280.10.peg.1965"/>
<dbReference type="eggNOG" id="COG3279">
    <property type="taxonomic scope" value="Bacteria"/>
</dbReference>
<dbReference type="HOGENOM" id="CLU_000445_14_1_9"/>
<dbReference type="OrthoDB" id="9809318at2"/>
<dbReference type="Proteomes" id="UP000001411">
    <property type="component" value="Chromosome"/>
</dbReference>
<dbReference type="GO" id="GO:0005737">
    <property type="term" value="C:cytoplasm"/>
    <property type="evidence" value="ECO:0007669"/>
    <property type="project" value="UniProtKB-SubCell"/>
</dbReference>
<dbReference type="GO" id="GO:0003677">
    <property type="term" value="F:DNA binding"/>
    <property type="evidence" value="ECO:0007669"/>
    <property type="project" value="UniProtKB-KW"/>
</dbReference>
<dbReference type="GO" id="GO:0000156">
    <property type="term" value="F:phosphorelay response regulator activity"/>
    <property type="evidence" value="ECO:0007669"/>
    <property type="project" value="InterPro"/>
</dbReference>
<dbReference type="Gene3D" id="2.20.25.10">
    <property type="match status" value="1"/>
</dbReference>
<dbReference type="Gene3D" id="2.40.50.40">
    <property type="match status" value="1"/>
</dbReference>
<dbReference type="Gene3D" id="3.40.50.2300">
    <property type="match status" value="1"/>
</dbReference>
<dbReference type="InterPro" id="IPR011006">
    <property type="entry name" value="CheY-like_superfamily"/>
</dbReference>
<dbReference type="InterPro" id="IPR046947">
    <property type="entry name" value="LytR-like"/>
</dbReference>
<dbReference type="InterPro" id="IPR007492">
    <property type="entry name" value="LytTR_DNA-bd_dom"/>
</dbReference>
<dbReference type="InterPro" id="IPR001789">
    <property type="entry name" value="Sig_transdc_resp-reg_receiver"/>
</dbReference>
<dbReference type="NCBIfam" id="NF010684">
    <property type="entry name" value="PRK14084.1"/>
    <property type="match status" value="1"/>
</dbReference>
<dbReference type="PANTHER" id="PTHR37299:SF1">
    <property type="entry name" value="STAGE 0 SPORULATION PROTEIN A HOMOLOG"/>
    <property type="match status" value="1"/>
</dbReference>
<dbReference type="PANTHER" id="PTHR37299">
    <property type="entry name" value="TRANSCRIPTIONAL REGULATOR-RELATED"/>
    <property type="match status" value="1"/>
</dbReference>
<dbReference type="Pfam" id="PF04397">
    <property type="entry name" value="LytTR"/>
    <property type="match status" value="1"/>
</dbReference>
<dbReference type="Pfam" id="PF00072">
    <property type="entry name" value="Response_reg"/>
    <property type="match status" value="1"/>
</dbReference>
<dbReference type="SMART" id="SM00850">
    <property type="entry name" value="LytTR"/>
    <property type="match status" value="1"/>
</dbReference>
<dbReference type="SMART" id="SM00448">
    <property type="entry name" value="REC"/>
    <property type="match status" value="1"/>
</dbReference>
<dbReference type="SUPFAM" id="SSF52172">
    <property type="entry name" value="CheY-like"/>
    <property type="match status" value="1"/>
</dbReference>
<dbReference type="PROSITE" id="PS50930">
    <property type="entry name" value="HTH_LYTTR"/>
    <property type="match status" value="1"/>
</dbReference>
<dbReference type="PROSITE" id="PS50110">
    <property type="entry name" value="RESPONSE_REGULATORY"/>
    <property type="match status" value="1"/>
</dbReference>
<organism>
    <name type="scientific">Staphylococcus epidermidis (strain ATCC 12228 / FDA PCI 1200)</name>
    <dbReference type="NCBI Taxonomy" id="176280"/>
    <lineage>
        <taxon>Bacteria</taxon>
        <taxon>Bacillati</taxon>
        <taxon>Bacillota</taxon>
        <taxon>Bacilli</taxon>
        <taxon>Bacillales</taxon>
        <taxon>Staphylococcaceae</taxon>
        <taxon>Staphylococcus</taxon>
    </lineage>
</organism>
<evidence type="ECO:0000250" key="1"/>
<evidence type="ECO:0000255" key="2">
    <source>
        <dbReference type="PROSITE-ProRule" id="PRU00112"/>
    </source>
</evidence>
<evidence type="ECO:0000255" key="3">
    <source>
        <dbReference type="PROSITE-ProRule" id="PRU00169"/>
    </source>
</evidence>
<reference key="1">
    <citation type="journal article" date="2003" name="Mol. Microbiol.">
        <title>Genome-based analysis of virulence genes in a non-biofilm-forming Staphylococcus epidermidis strain (ATCC 12228).</title>
        <authorList>
            <person name="Zhang Y.-Q."/>
            <person name="Ren S.-X."/>
            <person name="Li H.-L."/>
            <person name="Wang Y.-X."/>
            <person name="Fu G."/>
            <person name="Yang J."/>
            <person name="Qin Z.-Q."/>
            <person name="Miao Y.-G."/>
            <person name="Wang W.-Y."/>
            <person name="Chen R.-S."/>
            <person name="Shen Y."/>
            <person name="Chen Z."/>
            <person name="Yuan Z.-H."/>
            <person name="Zhao G.-P."/>
            <person name="Qu D."/>
            <person name="Danchin A."/>
            <person name="Wen Y.-M."/>
        </authorList>
    </citation>
    <scope>NUCLEOTIDE SEQUENCE [LARGE SCALE GENOMIC DNA]</scope>
    <source>
        <strain>ATCC 12228 / FDA PCI 1200</strain>
    </source>
</reference>
<feature type="chain" id="PRO_0000081133" description="Sensory transduction protein LytR">
    <location>
        <begin position="1"/>
        <end position="252"/>
    </location>
</feature>
<feature type="domain" description="Response regulatory" evidence="3">
    <location>
        <begin position="2"/>
        <end position="116"/>
    </location>
</feature>
<feature type="domain" description="HTH LytTR-type" evidence="2">
    <location>
        <begin position="147"/>
        <end position="251"/>
    </location>
</feature>
<feature type="modified residue" description="4-aspartylphosphate" evidence="3">
    <location>
        <position position="53"/>
    </location>
</feature>
<keyword id="KW-0963">Cytoplasm</keyword>
<keyword id="KW-0238">DNA-binding</keyword>
<keyword id="KW-0597">Phosphoprotein</keyword>
<keyword id="KW-0804">Transcription</keyword>
<keyword id="KW-0805">Transcription regulation</keyword>
<keyword id="KW-0902">Two-component regulatory system</keyword>
<comment type="function">
    <text evidence="1">Member of the two-component regulatory system LytR/LytS that probably regulates genes involved in cell wall metabolism.</text>
</comment>
<comment type="subcellular location">
    <subcellularLocation>
        <location evidence="1">Cytoplasm</location>
    </subcellularLocation>
</comment>
<comment type="PTM">
    <text evidence="1">Phosphorylated by LytS.</text>
</comment>
<sequence>MKALIVDDEPLARNELQYLLNLNDAIDEIEEAENIEETLEKLLYNTFDLIFLDINLMDESGIDLAQKINKMKRSPHIIFATAHEKFAVKAFELNATDYILKPFEKERINQAVNKVDMAKDKSKNKDKTITPKYIDYSDDERAQTHVLPIEVDERIHILNFTDIIALSVNNGITTIDTTKQSYETTETLNHYEKKLPSSLFIKIHRATIVNKEHIQTIEHWFNYTYQLTLTHEFKYQVSRSYMKTFKQQLGLQ</sequence>
<accession>Q8CN55</accession>
<protein>
    <recommendedName>
        <fullName>Sensory transduction protein LytR</fullName>
    </recommendedName>
</protein>
<name>LYTR_STAES</name>
<proteinExistence type="inferred from homology"/>
<gene>
    <name type="primary">lytR</name>
    <name type="ordered locus">SE_2012</name>
</gene>